<sequence length="880" mass="97635">MKLDEIVAWYQKRIGTYDKQEWEKTVEQRILDGFNSVNLKNTKLKTELIDVDLVRGSTFPKAKPKQSLLTVIRLAILRYVLLPLYAQWWVKQTTPNAFGFILVLYLTQLTNWAIYVLHSSRIVPLDYEKPPNGTLLQAEADGDASDKDADKESEEHAALLSALLIPCALSLLISLIHSQIVATNTASGVSGGSSKNKLRRISASYLSDKAATRENRVRRRKKIVRVRQVEADLSQASSNISLPNRRTATSTIEVLPRPVTPLPSPTVTCATVPDPTTPTTPSPSVIRRSTNEETYLTTTAISPLTQPLAAIDACYDLSRKAGGAAPESPKKRNVNWHTPIQIYATYELGEEPCSSRKVAEESAPESVGERLCSVKPDYQTRRNIGEDDGFESLNGKSSSGEDNNHSPLPNAVAVAAPPAPVQTNQLRLRLNTTNGVTASASPTEKKPQSRGNESSTSCAESDECDDADIMSSPASGCNQECTTSATDWLGVTTNSEDCSYTSDLDHSDGGLKHTAFSDEDPGELDITPTTILNPHSSLDRISCTIWDQRDAKKAQLSVLEIASCIIERVDSMGEANDYIYIGVVFSFLLTLIPIFCRLCEVTLGSDAEKASEISYFNMPQLLWEKSSASLFTLLGLAFGDSQWERMVLALGFVQRLCLTLILFIIFAVAERTFKQRFLYAKLFSHLTSSRRARKSNLPHFRLNKVRNIKTWLSVRSYLKKRGPQRSVDIIVSAAFIVTLLLLAFLSVEWLKDSAHLHTHLTLEALIWSITIGIFLLRFMTLGQKIQHKYRSVSVLITEQINLYLQIEQKPKKKDELMVSNSVLKLAADLLKELETPFKLSGLSANPYLFTTIKVVILSALSGVLSEVLGFKLKLHKIKIK</sequence>
<accession>Q9V9A8</accession>
<accession>Q9TW25</accession>
<reference key="1">
    <citation type="journal article" date="2000" name="Genomics">
        <title>Molecular characterization of a novel gene family (PHTF) conserved from Drosophila to mammals.</title>
        <authorList>
            <person name="Manuel A."/>
            <person name="Beaupain D."/>
            <person name="Romeo P.-H."/>
            <person name="Raich N."/>
        </authorList>
    </citation>
    <scope>NUCLEOTIDE SEQUENCE [MRNA]</scope>
    <source>
        <tissue>Testis</tissue>
    </source>
</reference>
<reference key="2">
    <citation type="journal article" date="2000" name="Science">
        <title>The genome sequence of Drosophila melanogaster.</title>
        <authorList>
            <person name="Adams M.D."/>
            <person name="Celniker S.E."/>
            <person name="Holt R.A."/>
            <person name="Evans C.A."/>
            <person name="Gocayne J.D."/>
            <person name="Amanatides P.G."/>
            <person name="Scherer S.E."/>
            <person name="Li P.W."/>
            <person name="Hoskins R.A."/>
            <person name="Galle R.F."/>
            <person name="George R.A."/>
            <person name="Lewis S.E."/>
            <person name="Richards S."/>
            <person name="Ashburner M."/>
            <person name="Henderson S.N."/>
            <person name="Sutton G.G."/>
            <person name="Wortman J.R."/>
            <person name="Yandell M.D."/>
            <person name="Zhang Q."/>
            <person name="Chen L.X."/>
            <person name="Brandon R.C."/>
            <person name="Rogers Y.-H.C."/>
            <person name="Blazej R.G."/>
            <person name="Champe M."/>
            <person name="Pfeiffer B.D."/>
            <person name="Wan K.H."/>
            <person name="Doyle C."/>
            <person name="Baxter E.G."/>
            <person name="Helt G."/>
            <person name="Nelson C.R."/>
            <person name="Miklos G.L.G."/>
            <person name="Abril J.F."/>
            <person name="Agbayani A."/>
            <person name="An H.-J."/>
            <person name="Andrews-Pfannkoch C."/>
            <person name="Baldwin D."/>
            <person name="Ballew R.M."/>
            <person name="Basu A."/>
            <person name="Baxendale J."/>
            <person name="Bayraktaroglu L."/>
            <person name="Beasley E.M."/>
            <person name="Beeson K.Y."/>
            <person name="Benos P.V."/>
            <person name="Berman B.P."/>
            <person name="Bhandari D."/>
            <person name="Bolshakov S."/>
            <person name="Borkova D."/>
            <person name="Botchan M.R."/>
            <person name="Bouck J."/>
            <person name="Brokstein P."/>
            <person name="Brottier P."/>
            <person name="Burtis K.C."/>
            <person name="Busam D.A."/>
            <person name="Butler H."/>
            <person name="Cadieu E."/>
            <person name="Center A."/>
            <person name="Chandra I."/>
            <person name="Cherry J.M."/>
            <person name="Cawley S."/>
            <person name="Dahlke C."/>
            <person name="Davenport L.B."/>
            <person name="Davies P."/>
            <person name="de Pablos B."/>
            <person name="Delcher A."/>
            <person name="Deng Z."/>
            <person name="Mays A.D."/>
            <person name="Dew I."/>
            <person name="Dietz S.M."/>
            <person name="Dodson K."/>
            <person name="Doup L.E."/>
            <person name="Downes M."/>
            <person name="Dugan-Rocha S."/>
            <person name="Dunkov B.C."/>
            <person name="Dunn P."/>
            <person name="Durbin K.J."/>
            <person name="Evangelista C.C."/>
            <person name="Ferraz C."/>
            <person name="Ferriera S."/>
            <person name="Fleischmann W."/>
            <person name="Fosler C."/>
            <person name="Gabrielian A.E."/>
            <person name="Garg N.S."/>
            <person name="Gelbart W.M."/>
            <person name="Glasser K."/>
            <person name="Glodek A."/>
            <person name="Gong F."/>
            <person name="Gorrell J.H."/>
            <person name="Gu Z."/>
            <person name="Guan P."/>
            <person name="Harris M."/>
            <person name="Harris N.L."/>
            <person name="Harvey D.A."/>
            <person name="Heiman T.J."/>
            <person name="Hernandez J.R."/>
            <person name="Houck J."/>
            <person name="Hostin D."/>
            <person name="Houston K.A."/>
            <person name="Howland T.J."/>
            <person name="Wei M.-H."/>
            <person name="Ibegwam C."/>
            <person name="Jalali M."/>
            <person name="Kalush F."/>
            <person name="Karpen G.H."/>
            <person name="Ke Z."/>
            <person name="Kennison J.A."/>
            <person name="Ketchum K.A."/>
            <person name="Kimmel B.E."/>
            <person name="Kodira C.D."/>
            <person name="Kraft C.L."/>
            <person name="Kravitz S."/>
            <person name="Kulp D."/>
            <person name="Lai Z."/>
            <person name="Lasko P."/>
            <person name="Lei Y."/>
            <person name="Levitsky A.A."/>
            <person name="Li J.H."/>
            <person name="Li Z."/>
            <person name="Liang Y."/>
            <person name="Lin X."/>
            <person name="Liu X."/>
            <person name="Mattei B."/>
            <person name="McIntosh T.C."/>
            <person name="McLeod M.P."/>
            <person name="McPherson D."/>
            <person name="Merkulov G."/>
            <person name="Milshina N.V."/>
            <person name="Mobarry C."/>
            <person name="Morris J."/>
            <person name="Moshrefi A."/>
            <person name="Mount S.M."/>
            <person name="Moy M."/>
            <person name="Murphy B."/>
            <person name="Murphy L."/>
            <person name="Muzny D.M."/>
            <person name="Nelson D.L."/>
            <person name="Nelson D.R."/>
            <person name="Nelson K.A."/>
            <person name="Nixon K."/>
            <person name="Nusskern D.R."/>
            <person name="Pacleb J.M."/>
            <person name="Palazzolo M."/>
            <person name="Pittman G.S."/>
            <person name="Pan S."/>
            <person name="Pollard J."/>
            <person name="Puri V."/>
            <person name="Reese M.G."/>
            <person name="Reinert K."/>
            <person name="Remington K."/>
            <person name="Saunders R.D.C."/>
            <person name="Scheeler F."/>
            <person name="Shen H."/>
            <person name="Shue B.C."/>
            <person name="Siden-Kiamos I."/>
            <person name="Simpson M."/>
            <person name="Skupski M.P."/>
            <person name="Smith T.J."/>
            <person name="Spier E."/>
            <person name="Spradling A.C."/>
            <person name="Stapleton M."/>
            <person name="Strong R."/>
            <person name="Sun E."/>
            <person name="Svirskas R."/>
            <person name="Tector C."/>
            <person name="Turner R."/>
            <person name="Venter E."/>
            <person name="Wang A.H."/>
            <person name="Wang X."/>
            <person name="Wang Z.-Y."/>
            <person name="Wassarman D.A."/>
            <person name="Weinstock G.M."/>
            <person name="Weissenbach J."/>
            <person name="Williams S.M."/>
            <person name="Woodage T."/>
            <person name="Worley K.C."/>
            <person name="Wu D."/>
            <person name="Yang S."/>
            <person name="Yao Q.A."/>
            <person name="Ye J."/>
            <person name="Yeh R.-F."/>
            <person name="Zaveri J.S."/>
            <person name="Zhan M."/>
            <person name="Zhang G."/>
            <person name="Zhao Q."/>
            <person name="Zheng L."/>
            <person name="Zheng X.H."/>
            <person name="Zhong F.N."/>
            <person name="Zhong W."/>
            <person name="Zhou X."/>
            <person name="Zhu S.C."/>
            <person name="Zhu X."/>
            <person name="Smith H.O."/>
            <person name="Gibbs R.A."/>
            <person name="Myers E.W."/>
            <person name="Rubin G.M."/>
            <person name="Venter J.C."/>
        </authorList>
    </citation>
    <scope>NUCLEOTIDE SEQUENCE [LARGE SCALE GENOMIC DNA]</scope>
    <source>
        <strain>Berkeley</strain>
    </source>
</reference>
<reference key="3">
    <citation type="journal article" date="2002" name="Genome Biol.">
        <title>Annotation of the Drosophila melanogaster euchromatic genome: a systematic review.</title>
        <authorList>
            <person name="Misra S."/>
            <person name="Crosby M.A."/>
            <person name="Mungall C.J."/>
            <person name="Matthews B.B."/>
            <person name="Campbell K.S."/>
            <person name="Hradecky P."/>
            <person name="Huang Y."/>
            <person name="Kaminker J.S."/>
            <person name="Millburn G.H."/>
            <person name="Prochnik S.E."/>
            <person name="Smith C.D."/>
            <person name="Tupy J.L."/>
            <person name="Whitfield E.J."/>
            <person name="Bayraktaroglu L."/>
            <person name="Berman B.P."/>
            <person name="Bettencourt B.R."/>
            <person name="Celniker S.E."/>
            <person name="de Grey A.D.N.J."/>
            <person name="Drysdale R.A."/>
            <person name="Harris N.L."/>
            <person name="Richter J."/>
            <person name="Russo S."/>
            <person name="Schroeder A.J."/>
            <person name="Shu S.Q."/>
            <person name="Stapleton M."/>
            <person name="Yamada C."/>
            <person name="Ashburner M."/>
            <person name="Gelbart W.M."/>
            <person name="Rubin G.M."/>
            <person name="Lewis S.E."/>
        </authorList>
    </citation>
    <scope>GENOME REANNOTATION</scope>
    <source>
        <strain>Berkeley</strain>
    </source>
</reference>
<reference key="4">
    <citation type="journal article" date="2000" name="Science">
        <title>A Drosophila complementary DNA resource.</title>
        <authorList>
            <person name="Rubin G.M."/>
            <person name="Hong L."/>
            <person name="Brokstein P."/>
            <person name="Evans-Holm M."/>
            <person name="Frise E."/>
            <person name="Stapleton M."/>
            <person name="Harvey D.A."/>
        </authorList>
    </citation>
    <scope>NUCLEOTIDE SEQUENCE [LARGE SCALE MRNA]</scope>
    <source>
        <strain>Berkeley</strain>
        <tissue>Embryo</tissue>
    </source>
</reference>
<reference key="5">
    <citation type="journal article" date="2008" name="J. Proteome Res.">
        <title>Phosphoproteome analysis of Drosophila melanogaster embryos.</title>
        <authorList>
            <person name="Zhai B."/>
            <person name="Villen J."/>
            <person name="Beausoleil S.A."/>
            <person name="Mintseris J."/>
            <person name="Gygi S.P."/>
        </authorList>
    </citation>
    <scope>PHOSPHORYLATION [LARGE SCALE ANALYSIS] AT SER-517 AND THR-527</scope>
    <scope>IDENTIFICATION BY MASS SPECTROMETRY</scope>
    <source>
        <tissue>Embryo</tissue>
    </source>
</reference>
<feature type="chain" id="PRO_0000127425" description="Protein phtf">
    <location>
        <begin position="1"/>
        <end position="880"/>
    </location>
</feature>
<feature type="transmembrane region" description="Helical" evidence="1">
    <location>
        <begin position="68"/>
        <end position="88"/>
    </location>
</feature>
<feature type="transmembrane region" description="Helical" evidence="1">
    <location>
        <begin position="97"/>
        <end position="117"/>
    </location>
</feature>
<feature type="transmembrane region" description="Helical" evidence="1">
    <location>
        <begin position="156"/>
        <end position="176"/>
    </location>
</feature>
<feature type="transmembrane region" description="Helical" evidence="1">
    <location>
        <begin position="575"/>
        <end position="595"/>
    </location>
</feature>
<feature type="transmembrane region" description="Helical" evidence="1">
    <location>
        <begin position="646"/>
        <end position="666"/>
    </location>
</feature>
<feature type="transmembrane region" description="Helical" evidence="1">
    <location>
        <begin position="727"/>
        <end position="747"/>
    </location>
</feature>
<feature type="transmembrane region" description="Helical" evidence="1">
    <location>
        <begin position="756"/>
        <end position="776"/>
    </location>
</feature>
<feature type="transmembrane region" description="Helical" evidence="1">
    <location>
        <begin position="848"/>
        <end position="868"/>
    </location>
</feature>
<feature type="domain" description="PHTF" evidence="1">
    <location>
        <begin position="4"/>
        <end position="185"/>
    </location>
</feature>
<feature type="region of interest" description="Disordered" evidence="3">
    <location>
        <begin position="256"/>
        <end position="286"/>
    </location>
</feature>
<feature type="region of interest" description="Disordered" evidence="3">
    <location>
        <begin position="357"/>
        <end position="412"/>
    </location>
</feature>
<feature type="region of interest" description="Disordered" evidence="3">
    <location>
        <begin position="434"/>
        <end position="464"/>
    </location>
</feature>
<feature type="compositionally biased region" description="Low complexity" evidence="3">
    <location>
        <begin position="265"/>
        <end position="274"/>
    </location>
</feature>
<feature type="compositionally biased region" description="Polar residues" evidence="3">
    <location>
        <begin position="394"/>
        <end position="407"/>
    </location>
</feature>
<feature type="compositionally biased region" description="Polar residues" evidence="3">
    <location>
        <begin position="449"/>
        <end position="459"/>
    </location>
</feature>
<feature type="modified residue" description="Phosphoserine" evidence="4">
    <location>
        <position position="517"/>
    </location>
</feature>
<feature type="modified residue" description="Phosphothreonine" evidence="4">
    <location>
        <position position="527"/>
    </location>
</feature>
<feature type="glycosylation site" description="N-linked (GlcNAc...) asparagine" evidence="2">
    <location>
        <position position="132"/>
    </location>
</feature>
<feature type="glycosylation site" description="N-linked (GlcNAc...) asparagine" evidence="2">
    <location>
        <position position="239"/>
    </location>
</feature>
<feature type="glycosylation site" description="N-linked (GlcNAc...) asparagine" evidence="2">
    <location>
        <position position="431"/>
    </location>
</feature>
<feature type="glycosylation site" description="N-linked (GlcNAc...) asparagine" evidence="2">
    <location>
        <position position="452"/>
    </location>
</feature>
<evidence type="ECO:0000255" key="1"/>
<evidence type="ECO:0000255" key="2">
    <source>
        <dbReference type="PROSITE-ProRule" id="PRU00498"/>
    </source>
</evidence>
<evidence type="ECO:0000256" key="3">
    <source>
        <dbReference type="SAM" id="MobiDB-lite"/>
    </source>
</evidence>
<evidence type="ECO:0000269" key="4">
    <source>
    </source>
</evidence>
<evidence type="ECO:0000305" key="5"/>
<organism>
    <name type="scientific">Drosophila melanogaster</name>
    <name type="common">Fruit fly</name>
    <dbReference type="NCBI Taxonomy" id="7227"/>
    <lineage>
        <taxon>Eukaryota</taxon>
        <taxon>Metazoa</taxon>
        <taxon>Ecdysozoa</taxon>
        <taxon>Arthropoda</taxon>
        <taxon>Hexapoda</taxon>
        <taxon>Insecta</taxon>
        <taxon>Pterygota</taxon>
        <taxon>Neoptera</taxon>
        <taxon>Endopterygota</taxon>
        <taxon>Diptera</taxon>
        <taxon>Brachycera</taxon>
        <taxon>Muscomorpha</taxon>
        <taxon>Ephydroidea</taxon>
        <taxon>Drosophilidae</taxon>
        <taxon>Drosophila</taxon>
        <taxon>Sophophora</taxon>
    </lineage>
</organism>
<gene>
    <name type="primary">phtf</name>
    <name type="ORF">CG3268</name>
</gene>
<name>PHTF_DROME</name>
<comment type="subcellular location">
    <subcellularLocation>
        <location evidence="1">Membrane</location>
        <topology evidence="1">Multi-pass membrane protein</topology>
    </subcellularLocation>
</comment>
<keyword id="KW-0325">Glycoprotein</keyword>
<keyword id="KW-0472">Membrane</keyword>
<keyword id="KW-0597">Phosphoprotein</keyword>
<keyword id="KW-1185">Reference proteome</keyword>
<keyword id="KW-0812">Transmembrane</keyword>
<keyword id="KW-1133">Transmembrane helix</keyword>
<protein>
    <recommendedName>
        <fullName evidence="5">Protein phtf</fullName>
    </recommendedName>
</protein>
<proteinExistence type="evidence at protein level"/>
<dbReference type="EMBL" id="AJ242938">
    <property type="protein sequence ID" value="CAB62168.1"/>
    <property type="molecule type" value="mRNA"/>
</dbReference>
<dbReference type="EMBL" id="AE013599">
    <property type="protein sequence ID" value="AAM70823.1"/>
    <property type="molecule type" value="Genomic_DNA"/>
</dbReference>
<dbReference type="EMBL" id="AF181638">
    <property type="protein sequence ID" value="AAD55424.1"/>
    <property type="molecule type" value="mRNA"/>
</dbReference>
<dbReference type="RefSeq" id="NP_610232.1">
    <property type="nucleotide sequence ID" value="NM_136388.3"/>
</dbReference>
<dbReference type="BioGRID" id="61479">
    <property type="interactions" value="2"/>
</dbReference>
<dbReference type="DIP" id="DIP-23458N"/>
<dbReference type="FunCoup" id="Q9V9A8">
    <property type="interactions" value="211"/>
</dbReference>
<dbReference type="IntAct" id="Q9V9A8">
    <property type="interactions" value="1"/>
</dbReference>
<dbReference type="STRING" id="7227.FBpp0085459"/>
<dbReference type="TCDB" id="1.A.152.1.1">
    <property type="family name" value="the putative ion channel-receptor (picr) family"/>
</dbReference>
<dbReference type="GlyCosmos" id="Q9V9A8">
    <property type="glycosylation" value="4 sites, No reported glycans"/>
</dbReference>
<dbReference type="GlyGen" id="Q9V9A8">
    <property type="glycosylation" value="4 sites"/>
</dbReference>
<dbReference type="iPTMnet" id="Q9V9A8"/>
<dbReference type="PaxDb" id="7227-FBpp0085459"/>
<dbReference type="EnsemblMetazoa" id="FBtr0086125">
    <property type="protein sequence ID" value="FBpp0085459"/>
    <property type="gene ID" value="FBgn0028579"/>
</dbReference>
<dbReference type="GeneID" id="35583"/>
<dbReference type="KEGG" id="dme:Dmel_CG3268"/>
<dbReference type="UCSC" id="CG3268-RA">
    <property type="organism name" value="d. melanogaster"/>
</dbReference>
<dbReference type="AGR" id="FB:FBgn0028579"/>
<dbReference type="CTD" id="35583"/>
<dbReference type="FlyBase" id="FBgn0028579">
    <property type="gene designation" value="phtf"/>
</dbReference>
<dbReference type="VEuPathDB" id="VectorBase:FBgn0028579"/>
<dbReference type="eggNOG" id="ENOG502QQGQ">
    <property type="taxonomic scope" value="Eukaryota"/>
</dbReference>
<dbReference type="GeneTree" id="ENSGT00390000011648"/>
<dbReference type="HOGENOM" id="CLU_013937_0_0_1"/>
<dbReference type="InParanoid" id="Q9V9A8"/>
<dbReference type="OMA" id="KMWQTRE"/>
<dbReference type="OrthoDB" id="10066656at2759"/>
<dbReference type="PhylomeDB" id="Q9V9A8"/>
<dbReference type="BioGRID-ORCS" id="35583">
    <property type="hits" value="0 hits in 3 CRISPR screens"/>
</dbReference>
<dbReference type="GenomeRNAi" id="35583"/>
<dbReference type="PRO" id="PR:Q9V9A8"/>
<dbReference type="Proteomes" id="UP000000803">
    <property type="component" value="Chromosome 2R"/>
</dbReference>
<dbReference type="Bgee" id="FBgn0028579">
    <property type="expression patterns" value="Expressed in mid-late elongation-stage spermatid (Drosophila) in testis and 162 other cell types or tissues"/>
</dbReference>
<dbReference type="GO" id="GO:0005789">
    <property type="term" value="C:endoplasmic reticulum membrane"/>
    <property type="evidence" value="ECO:0000250"/>
    <property type="project" value="FlyBase"/>
</dbReference>
<dbReference type="GO" id="GO:0016020">
    <property type="term" value="C:membrane"/>
    <property type="evidence" value="ECO:0000255"/>
    <property type="project" value="FlyBase"/>
</dbReference>
<dbReference type="GO" id="GO:0015267">
    <property type="term" value="F:channel activity"/>
    <property type="evidence" value="ECO:0000255"/>
    <property type="project" value="FlyBase"/>
</dbReference>
<dbReference type="GO" id="GO:0055085">
    <property type="term" value="P:transmembrane transport"/>
    <property type="evidence" value="ECO:0000255"/>
    <property type="project" value="FlyBase"/>
</dbReference>
<dbReference type="InterPro" id="IPR039775">
    <property type="entry name" value="PHTF1/2"/>
</dbReference>
<dbReference type="InterPro" id="IPR021980">
    <property type="entry name" value="PHTF1/2_N"/>
</dbReference>
<dbReference type="PANTHER" id="PTHR12680:SF6">
    <property type="entry name" value="PROTEIN PHTF"/>
    <property type="match status" value="1"/>
</dbReference>
<dbReference type="PANTHER" id="PTHR12680">
    <property type="entry name" value="PUTATIVE HOMEODOMAIN TRANSCRIPTION FACTOR PHTF"/>
    <property type="match status" value="1"/>
</dbReference>
<dbReference type="Pfam" id="PF12129">
    <property type="entry name" value="PHTF1-2_N"/>
    <property type="match status" value="1"/>
</dbReference>